<comment type="function">
    <text evidence="1">Plays a central role in 2-thiolation of mcm(5)S(2)U at tRNA wobble positions of tRNA(Lys), tRNA(Glu) and tRNA(Gln). May act by forming a heterodimer with tut-1/ctu-1 that ligates sulfur from thiocarboxylated urm-1 onto the uridine of tRNAs at wobble position.</text>
</comment>
<comment type="pathway">
    <text evidence="1">tRNA modification; 5-methoxycarbonylmethyl-2-thiouridine-tRNA biosynthesis.</text>
</comment>
<comment type="subcellular location">
    <subcellularLocation>
        <location evidence="1">Cytoplasm</location>
    </subcellularLocation>
</comment>
<comment type="similarity">
    <text evidence="1">Belongs to the CTU2/NCS2 family.</text>
</comment>
<protein>
    <recommendedName>
        <fullName evidence="1">Cytoplasmic tRNA 2-thiolation protein 2</fullName>
    </recommendedName>
    <alternativeName>
        <fullName evidence="1">Thiolation of uridine in tRNA protein 2</fullName>
    </alternativeName>
</protein>
<reference key="1">
    <citation type="journal article" date="2003" name="PLoS Biol.">
        <title>The genome sequence of Caenorhabditis briggsae: a platform for comparative genomics.</title>
        <authorList>
            <person name="Stein L.D."/>
            <person name="Bao Z."/>
            <person name="Blasiar D."/>
            <person name="Blumenthal T."/>
            <person name="Brent M.R."/>
            <person name="Chen N."/>
            <person name="Chinwalla A."/>
            <person name="Clarke L."/>
            <person name="Clee C."/>
            <person name="Coghlan A."/>
            <person name="Coulson A."/>
            <person name="D'Eustachio P."/>
            <person name="Fitch D.H.A."/>
            <person name="Fulton L.A."/>
            <person name="Fulton R.E."/>
            <person name="Griffiths-Jones S."/>
            <person name="Harris T.W."/>
            <person name="Hillier L.W."/>
            <person name="Kamath R."/>
            <person name="Kuwabara P.E."/>
            <person name="Mardis E.R."/>
            <person name="Marra M.A."/>
            <person name="Miner T.L."/>
            <person name="Minx P."/>
            <person name="Mullikin J.C."/>
            <person name="Plumb R.W."/>
            <person name="Rogers J."/>
            <person name="Schein J.E."/>
            <person name="Sohrmann M."/>
            <person name="Spieth J."/>
            <person name="Stajich J.E."/>
            <person name="Wei C."/>
            <person name="Willey D."/>
            <person name="Wilson R.K."/>
            <person name="Durbin R.M."/>
            <person name="Waterston R.H."/>
        </authorList>
    </citation>
    <scope>NUCLEOTIDE SEQUENCE [LARGE SCALE GENOMIC DNA]</scope>
    <source>
        <strain>AF16</strain>
    </source>
</reference>
<dbReference type="EMBL" id="HE600998">
    <property type="protein sequence ID" value="CAP28947.2"/>
    <property type="molecule type" value="Genomic_DNA"/>
</dbReference>
<dbReference type="FunCoup" id="A8X8I6">
    <property type="interactions" value="2509"/>
</dbReference>
<dbReference type="STRING" id="6238.A8X8I6"/>
<dbReference type="EnsemblMetazoa" id="CBG09667.1">
    <property type="protein sequence ID" value="CBG09667.1"/>
    <property type="gene ID" value="WBGene00031222"/>
</dbReference>
<dbReference type="WormBase" id="CBG09667">
    <property type="protein sequence ID" value="CBP31444"/>
    <property type="gene ID" value="WBGene00031222"/>
    <property type="gene designation" value="Cbr-tut-2"/>
</dbReference>
<dbReference type="eggNOG" id="KOG2594">
    <property type="taxonomic scope" value="Eukaryota"/>
</dbReference>
<dbReference type="HOGENOM" id="CLU_024534_0_0_1"/>
<dbReference type="InParanoid" id="A8X8I6"/>
<dbReference type="OMA" id="CHACRNI"/>
<dbReference type="UniPathway" id="UPA00988"/>
<dbReference type="Proteomes" id="UP000008549">
    <property type="component" value="Unassembled WGS sequence"/>
</dbReference>
<dbReference type="GO" id="GO:0005829">
    <property type="term" value="C:cytosol"/>
    <property type="evidence" value="ECO:0000250"/>
    <property type="project" value="UniProtKB"/>
</dbReference>
<dbReference type="GO" id="GO:0016779">
    <property type="term" value="F:nucleotidyltransferase activity"/>
    <property type="evidence" value="ECO:0007669"/>
    <property type="project" value="UniProtKB-UniRule"/>
</dbReference>
<dbReference type="GO" id="GO:0016783">
    <property type="term" value="F:sulfurtransferase activity"/>
    <property type="evidence" value="ECO:0000318"/>
    <property type="project" value="GO_Central"/>
</dbReference>
<dbReference type="GO" id="GO:0000049">
    <property type="term" value="F:tRNA binding"/>
    <property type="evidence" value="ECO:0007669"/>
    <property type="project" value="InterPro"/>
</dbReference>
<dbReference type="GO" id="GO:0032447">
    <property type="term" value="P:protein urmylation"/>
    <property type="evidence" value="ECO:0007669"/>
    <property type="project" value="UniProtKB-UniRule"/>
</dbReference>
<dbReference type="GO" id="GO:0034227">
    <property type="term" value="P:tRNA thio-modification"/>
    <property type="evidence" value="ECO:0000250"/>
    <property type="project" value="UniProtKB"/>
</dbReference>
<dbReference type="GO" id="GO:0002143">
    <property type="term" value="P:tRNA wobble position uridine thiolation"/>
    <property type="evidence" value="ECO:0000318"/>
    <property type="project" value="GO_Central"/>
</dbReference>
<dbReference type="GO" id="GO:0002098">
    <property type="term" value="P:tRNA wobble uridine modification"/>
    <property type="evidence" value="ECO:0000250"/>
    <property type="project" value="UniProtKB"/>
</dbReference>
<dbReference type="FunFam" id="3.40.50.620:FF:000431">
    <property type="entry name" value="Cytoplasmic tRNA 2-thiolation protein 2"/>
    <property type="match status" value="1"/>
</dbReference>
<dbReference type="Gene3D" id="3.40.50.620">
    <property type="entry name" value="HUPs"/>
    <property type="match status" value="1"/>
</dbReference>
<dbReference type="HAMAP" id="MF_03054">
    <property type="entry name" value="CTU2"/>
    <property type="match status" value="1"/>
</dbReference>
<dbReference type="InterPro" id="IPR019407">
    <property type="entry name" value="CTU2"/>
</dbReference>
<dbReference type="InterPro" id="IPR014729">
    <property type="entry name" value="Rossmann-like_a/b/a_fold"/>
</dbReference>
<dbReference type="PANTHER" id="PTHR20882">
    <property type="entry name" value="CYTOPLASMIC TRNA 2-THIOLATION PROTEIN 2"/>
    <property type="match status" value="1"/>
</dbReference>
<dbReference type="PANTHER" id="PTHR20882:SF14">
    <property type="entry name" value="CYTOPLASMIC TRNA 2-THIOLATION PROTEIN 2"/>
    <property type="match status" value="1"/>
</dbReference>
<dbReference type="Pfam" id="PF10288">
    <property type="entry name" value="CTU2"/>
    <property type="match status" value="1"/>
</dbReference>
<dbReference type="SUPFAM" id="SSF52402">
    <property type="entry name" value="Adenine nucleotide alpha hydrolases-like"/>
    <property type="match status" value="1"/>
</dbReference>
<evidence type="ECO:0000255" key="1">
    <source>
        <dbReference type="HAMAP-Rule" id="MF_03054"/>
    </source>
</evidence>
<gene>
    <name evidence="1" type="primary">tut-2</name>
    <name type="ORF">CBG09667</name>
</gene>
<proteinExistence type="inferred from homology"/>
<feature type="chain" id="PRO_0000369265" description="Cytoplasmic tRNA 2-thiolation protein 2">
    <location>
        <begin position="1"/>
        <end position="349"/>
    </location>
</feature>
<name>CTU2_CAEBR</name>
<keyword id="KW-0963">Cytoplasm</keyword>
<keyword id="KW-1185">Reference proteome</keyword>
<keyword id="KW-0819">tRNA processing</keyword>
<sequence length="349" mass="39892">MNFNNFTSDLNGKTCVKCEKEAKFTGVDPKKAWYCQECFIQMVRNKFRSALSKKKIYKEADARDTLVVYDGSPSGTFLLNQIDDALKQITYKRLMVKPTVLVLVSESEEPEIQQVIKRVAEIKKNFLENVNWFIAHIAFCLYDEPSELKEFECNGIEKITAYKYLLASCSVPTYKKELERMLKEKCLQKLAESLKVTKCMVTDDADDLGRLALDQLCLGRGGSLSSLVTVAEKRNDFMIIRPLCDLSKREISIYNYLCKIDDHYIQFSHTQSQEKSVQTLTDAFIRTLEDEKFYSTINTVLSTASKIHNTNGKDGSRCSMCYVEVAEFQCETCSAVRNSCSENLNIIFS</sequence>
<accession>A8X8I6</accession>
<organism>
    <name type="scientific">Caenorhabditis briggsae</name>
    <dbReference type="NCBI Taxonomy" id="6238"/>
    <lineage>
        <taxon>Eukaryota</taxon>
        <taxon>Metazoa</taxon>
        <taxon>Ecdysozoa</taxon>
        <taxon>Nematoda</taxon>
        <taxon>Chromadorea</taxon>
        <taxon>Rhabditida</taxon>
        <taxon>Rhabditina</taxon>
        <taxon>Rhabditomorpha</taxon>
        <taxon>Rhabditoidea</taxon>
        <taxon>Rhabditidae</taxon>
        <taxon>Peloderinae</taxon>
        <taxon>Caenorhabditis</taxon>
    </lineage>
</organism>